<sequence length="387" mass="41881">MTSILNTVSTIHSSRVTSVDRVGVLSLRNSDSVEFTRRRSGFSTLIYESPGRRFVVRAAETDTDKVKSQTPDKAPAGGSSINQLLGIKGASQETNKWKIRLQLTKPVTWPPLVWGVVCGAAASGNFHWTPEDVAKSILCMMMSGPCLTGYTQTINDWYDRDIDAINEPYRPIPSGAISEPEVITQVWVLLLGGLGIAGILDVWAGHTTPTVFYLALGGSLLSYIYSAPPLKLKQNGWVGNFALGASYISLPWWAGQALFGTLTPDVVVLTLLYSIAGLGIAIVNDFKSVEGDRALGLQSLPVAFGTETAKWICVGAIDITQLSVAGYLLASGKPYYALALVALIIPQIVFQFKYFLKDPVKYDVKYQASAQPFLVLGIFVTALASQH</sequence>
<organism>
    <name type="scientific">Arabidopsis thaliana</name>
    <name type="common">Mouse-ear cress</name>
    <dbReference type="NCBI Taxonomy" id="3702"/>
    <lineage>
        <taxon>Eukaryota</taxon>
        <taxon>Viridiplantae</taxon>
        <taxon>Streptophyta</taxon>
        <taxon>Embryophyta</taxon>
        <taxon>Tracheophyta</taxon>
        <taxon>Spermatophyta</taxon>
        <taxon>Magnoliopsida</taxon>
        <taxon>eudicotyledons</taxon>
        <taxon>Gunneridae</taxon>
        <taxon>Pentapetalae</taxon>
        <taxon>rosids</taxon>
        <taxon>malvids</taxon>
        <taxon>Brassicales</taxon>
        <taxon>Brassicaceae</taxon>
        <taxon>Camelineae</taxon>
        <taxon>Arabidopsis</taxon>
    </lineage>
</organism>
<gene>
    <name type="primary">CHLG</name>
    <name type="synonym">G4</name>
    <name type="ordered locus">At3g51820</name>
    <name type="ORF">ATEM1.7</name>
</gene>
<keyword id="KW-0149">Chlorophyll biosynthesis</keyword>
<keyword id="KW-0150">Chloroplast</keyword>
<keyword id="KW-0472">Membrane</keyword>
<keyword id="KW-0934">Plastid</keyword>
<keyword id="KW-1185">Reference proteome</keyword>
<keyword id="KW-0808">Transferase</keyword>
<keyword id="KW-0809">Transit peptide</keyword>
<keyword id="KW-0812">Transmembrane</keyword>
<keyword id="KW-1133">Transmembrane helix</keyword>
<accession>Q38833</accession>
<dbReference type="EC" id="2.5.1.62"/>
<dbReference type="EMBL" id="U19382">
    <property type="protein sequence ID" value="AAA96740.1"/>
    <property type="molecule type" value="Genomic_DNA"/>
</dbReference>
<dbReference type="EMBL" id="AF049236">
    <property type="protein sequence ID" value="AAC14409.1"/>
    <property type="molecule type" value="Genomic_DNA"/>
</dbReference>
<dbReference type="EMBL" id="CP002686">
    <property type="protein sequence ID" value="AEE78848.1"/>
    <property type="molecule type" value="Genomic_DNA"/>
</dbReference>
<dbReference type="EMBL" id="AY081481">
    <property type="protein sequence ID" value="AAM10043.1"/>
    <property type="molecule type" value="mRNA"/>
</dbReference>
<dbReference type="EMBL" id="AY042821">
    <property type="protein sequence ID" value="AAK68761.1"/>
    <property type="molecule type" value="mRNA"/>
</dbReference>
<dbReference type="PIR" id="S60222">
    <property type="entry name" value="S60222"/>
</dbReference>
<dbReference type="RefSeq" id="NP_190750.1">
    <property type="nucleotide sequence ID" value="NM_115041.4"/>
</dbReference>
<dbReference type="SMR" id="Q38833"/>
<dbReference type="BioGRID" id="9663">
    <property type="interactions" value="2"/>
</dbReference>
<dbReference type="FunCoup" id="Q38833">
    <property type="interactions" value="996"/>
</dbReference>
<dbReference type="STRING" id="3702.Q38833"/>
<dbReference type="PaxDb" id="3702-AT3G51820.1"/>
<dbReference type="ProteomicsDB" id="245177"/>
<dbReference type="EnsemblPlants" id="AT3G51820.1">
    <property type="protein sequence ID" value="AT3G51820.1"/>
    <property type="gene ID" value="AT3G51820"/>
</dbReference>
<dbReference type="GeneID" id="824345"/>
<dbReference type="Gramene" id="AT3G51820.1">
    <property type="protein sequence ID" value="AT3G51820.1"/>
    <property type="gene ID" value="AT3G51820"/>
</dbReference>
<dbReference type="KEGG" id="ath:AT3G51820"/>
<dbReference type="Araport" id="AT3G51820"/>
<dbReference type="TAIR" id="AT3G51820">
    <property type="gene designation" value="G4"/>
</dbReference>
<dbReference type="eggNOG" id="ENOG502QQMP">
    <property type="taxonomic scope" value="Eukaryota"/>
</dbReference>
<dbReference type="HOGENOM" id="CLU_042598_1_0_1"/>
<dbReference type="InParanoid" id="Q38833"/>
<dbReference type="OMA" id="QDMYFLR"/>
<dbReference type="PhylomeDB" id="Q38833"/>
<dbReference type="BioCyc" id="ARA:AT3G51820-MONOMER"/>
<dbReference type="BioCyc" id="MetaCyc:AT3G51820-MONOMER"/>
<dbReference type="BRENDA" id="2.5.1.62">
    <property type="organism ID" value="399"/>
</dbReference>
<dbReference type="UniPathway" id="UPA00668"/>
<dbReference type="PRO" id="PR:Q38833"/>
<dbReference type="Proteomes" id="UP000006548">
    <property type="component" value="Chromosome 3"/>
</dbReference>
<dbReference type="ExpressionAtlas" id="Q38833">
    <property type="expression patterns" value="baseline and differential"/>
</dbReference>
<dbReference type="GO" id="GO:0009507">
    <property type="term" value="C:chloroplast"/>
    <property type="evidence" value="ECO:0007005"/>
    <property type="project" value="TAIR"/>
</dbReference>
<dbReference type="GO" id="GO:0031969">
    <property type="term" value="C:chloroplast membrane"/>
    <property type="evidence" value="ECO:0007669"/>
    <property type="project" value="UniProtKB-SubCell"/>
</dbReference>
<dbReference type="GO" id="GO:0009534">
    <property type="term" value="C:chloroplast thylakoid"/>
    <property type="evidence" value="ECO:0007005"/>
    <property type="project" value="TAIR"/>
</dbReference>
<dbReference type="GO" id="GO:0005829">
    <property type="term" value="C:cytosol"/>
    <property type="evidence" value="ECO:0007005"/>
    <property type="project" value="TAIR"/>
</dbReference>
<dbReference type="GO" id="GO:0046408">
    <property type="term" value="F:chlorophyll synthetase activity"/>
    <property type="evidence" value="ECO:0007669"/>
    <property type="project" value="UniProtKB-EC"/>
</dbReference>
<dbReference type="GO" id="GO:0015995">
    <property type="term" value="P:chlorophyll biosynthetic process"/>
    <property type="evidence" value="ECO:0007669"/>
    <property type="project" value="UniProtKB-UniPathway"/>
</dbReference>
<dbReference type="CDD" id="cd13958">
    <property type="entry name" value="PT_UbiA_chlorophyll"/>
    <property type="match status" value="1"/>
</dbReference>
<dbReference type="FunFam" id="1.10.357.140:FF:000015">
    <property type="entry name" value="Chlorophyll synthase, chloroplastic"/>
    <property type="match status" value="1"/>
</dbReference>
<dbReference type="FunFam" id="1.20.120.1780:FF:000005">
    <property type="entry name" value="Chlorophyll synthase, chloroplastic"/>
    <property type="match status" value="1"/>
</dbReference>
<dbReference type="Gene3D" id="1.10.357.140">
    <property type="entry name" value="UbiA prenyltransferase"/>
    <property type="match status" value="1"/>
</dbReference>
<dbReference type="Gene3D" id="1.20.120.1780">
    <property type="entry name" value="UbiA prenyltransferase"/>
    <property type="match status" value="1"/>
</dbReference>
<dbReference type="InterPro" id="IPR006372">
    <property type="entry name" value="Chl_synth"/>
</dbReference>
<dbReference type="InterPro" id="IPR011799">
    <property type="entry name" value="ChlG"/>
</dbReference>
<dbReference type="InterPro" id="IPR050475">
    <property type="entry name" value="Prenyltransferase_related"/>
</dbReference>
<dbReference type="InterPro" id="IPR000537">
    <property type="entry name" value="UbiA_prenyltransferase"/>
</dbReference>
<dbReference type="InterPro" id="IPR044878">
    <property type="entry name" value="UbiA_sf"/>
</dbReference>
<dbReference type="NCBIfam" id="TIGR02056">
    <property type="entry name" value="ChlG"/>
    <property type="match status" value="1"/>
</dbReference>
<dbReference type="NCBIfam" id="TIGR01476">
    <property type="entry name" value="chlor_syn_BchG"/>
    <property type="match status" value="1"/>
</dbReference>
<dbReference type="NCBIfam" id="NF005742">
    <property type="entry name" value="PRK07566.1"/>
    <property type="match status" value="1"/>
</dbReference>
<dbReference type="PANTHER" id="PTHR42723">
    <property type="entry name" value="CHLOROPHYLL SYNTHASE"/>
    <property type="match status" value="1"/>
</dbReference>
<dbReference type="PANTHER" id="PTHR42723:SF1">
    <property type="entry name" value="CHLOROPHYLL SYNTHASE, CHLOROPLASTIC"/>
    <property type="match status" value="1"/>
</dbReference>
<dbReference type="Pfam" id="PF01040">
    <property type="entry name" value="UbiA"/>
    <property type="match status" value="1"/>
</dbReference>
<comment type="function">
    <text evidence="4">Involved in one of the last steps of the biosynthesis of chlorophyll a. Catalyzes the esterification of chlorophillide a or b with a preference for geranylgeranyldiphosphate (GGPP) rather than for phytyldiphosphate (PhyPP).</text>
</comment>
<comment type="catalytic activity">
    <reaction>
        <text>phytyl diphosphate + chlorophyllide a + H(+) = chlorophyll a + diphosphate</text>
        <dbReference type="Rhea" id="RHEA:17317"/>
        <dbReference type="ChEBI" id="CHEBI:15378"/>
        <dbReference type="ChEBI" id="CHEBI:33019"/>
        <dbReference type="ChEBI" id="CHEBI:58416"/>
        <dbReference type="ChEBI" id="CHEBI:75434"/>
        <dbReference type="ChEBI" id="CHEBI:83348"/>
        <dbReference type="EC" id="2.5.1.62"/>
    </reaction>
</comment>
<comment type="pathway">
    <text>Porphyrin-containing compound metabolism; chlorophyll biosynthesis.</text>
</comment>
<comment type="subcellular location">
    <subcellularLocation>
        <location evidence="5">Plastid</location>
        <location evidence="5">Chloroplast membrane</location>
        <topology evidence="5">Multi-pass membrane protein</topology>
    </subcellularLocation>
</comment>
<comment type="tissue specificity">
    <text evidence="3">Low level in flower buds, flowers, stems, leaves, greening cotyledons and immature siliques, but not in mature siliques or seeds.</text>
</comment>
<comment type="similarity">
    <text evidence="5">Belongs to the UbiA prenyltransferase family. Chlorophyll synthase subfamily.</text>
</comment>
<feature type="transit peptide" description="Chloroplast" evidence="1">
    <location>
        <begin position="1"/>
        <end position="57"/>
    </location>
</feature>
<feature type="chain" id="PRO_0000285115" description="Chlorophyll synthase, chloroplastic">
    <location>
        <begin position="58"/>
        <end position="387"/>
    </location>
</feature>
<feature type="transmembrane region" description="Helical" evidence="1">
    <location>
        <begin position="182"/>
        <end position="202"/>
    </location>
</feature>
<feature type="transmembrane region" description="Helical" evidence="1">
    <location>
        <begin position="210"/>
        <end position="230"/>
    </location>
</feature>
<feature type="transmembrane region" description="Helical" evidence="1">
    <location>
        <begin position="241"/>
        <end position="261"/>
    </location>
</feature>
<feature type="transmembrane region" description="Helical" evidence="1">
    <location>
        <begin position="266"/>
        <end position="286"/>
    </location>
</feature>
<feature type="transmembrane region" description="Helical" evidence="1">
    <location>
        <begin position="311"/>
        <end position="331"/>
    </location>
</feature>
<feature type="transmembrane region" description="Helical" evidence="1">
    <location>
        <begin position="336"/>
        <end position="356"/>
    </location>
</feature>
<feature type="transmembrane region" description="Helical" evidence="1">
    <location>
        <begin position="364"/>
        <end position="384"/>
    </location>
</feature>
<feature type="region of interest" description="Disordered" evidence="2">
    <location>
        <begin position="62"/>
        <end position="81"/>
    </location>
</feature>
<proteinExistence type="evidence at transcript level"/>
<reference key="1">
    <citation type="journal article" date="1995" name="Mol. Gen. Genet.">
        <title>A chlorophyll synthetase gene from Arabidopsis thaliana.</title>
        <authorList>
            <person name="Gaubier P."/>
            <person name="Wu H.-J."/>
            <person name="Laudie M."/>
            <person name="Delseny M."/>
            <person name="Grellet F."/>
        </authorList>
    </citation>
    <scope>NUCLEOTIDE SEQUENCE [GENOMIC DNA]</scope>
    <scope>TISSUE SPECIFICITY</scope>
    <source>
        <strain>cv. Columbia</strain>
    </source>
</reference>
<reference key="2">
    <citation type="journal article" date="1999" name="Plant Mol. Biol.">
        <title>Fine sequence analysis of 60 kb around the Arabidopsis thaliana AtEm1 locus on chromosome III.</title>
        <authorList>
            <person name="Comella P."/>
            <person name="Wu H.-J."/>
            <person name="Laudie M."/>
            <person name="Berger C."/>
            <person name="Cooke R."/>
            <person name="Delseny M."/>
            <person name="Grellet F."/>
        </authorList>
    </citation>
    <scope>NUCLEOTIDE SEQUENCE [LARGE SCALE GENOMIC DNA]</scope>
    <source>
        <strain>cv. Columbia</strain>
    </source>
</reference>
<reference key="3">
    <citation type="journal article" date="2017" name="Plant J.">
        <title>Araport11: a complete reannotation of the Arabidopsis thaliana reference genome.</title>
        <authorList>
            <person name="Cheng C.Y."/>
            <person name="Krishnakumar V."/>
            <person name="Chan A.P."/>
            <person name="Thibaud-Nissen F."/>
            <person name="Schobel S."/>
            <person name="Town C.D."/>
        </authorList>
    </citation>
    <scope>GENOME REANNOTATION</scope>
    <source>
        <strain>cv. Columbia</strain>
    </source>
</reference>
<reference key="4">
    <citation type="journal article" date="2003" name="Science">
        <title>Empirical analysis of transcriptional activity in the Arabidopsis genome.</title>
        <authorList>
            <person name="Yamada K."/>
            <person name="Lim J."/>
            <person name="Dale J.M."/>
            <person name="Chen H."/>
            <person name="Shinn P."/>
            <person name="Palm C.J."/>
            <person name="Southwick A.M."/>
            <person name="Wu H.C."/>
            <person name="Kim C.J."/>
            <person name="Nguyen M."/>
            <person name="Pham P.K."/>
            <person name="Cheuk R.F."/>
            <person name="Karlin-Newmann G."/>
            <person name="Liu S.X."/>
            <person name="Lam B."/>
            <person name="Sakano H."/>
            <person name="Wu T."/>
            <person name="Yu G."/>
            <person name="Miranda M."/>
            <person name="Quach H.L."/>
            <person name="Tripp M."/>
            <person name="Chang C.H."/>
            <person name="Lee J.M."/>
            <person name="Toriumi M.J."/>
            <person name="Chan M.M."/>
            <person name="Tang C.C."/>
            <person name="Onodera C.S."/>
            <person name="Deng J.M."/>
            <person name="Akiyama K."/>
            <person name="Ansari Y."/>
            <person name="Arakawa T."/>
            <person name="Banh J."/>
            <person name="Banno F."/>
            <person name="Bowser L."/>
            <person name="Brooks S.Y."/>
            <person name="Carninci P."/>
            <person name="Chao Q."/>
            <person name="Choy N."/>
            <person name="Enju A."/>
            <person name="Goldsmith A.D."/>
            <person name="Gurjal M."/>
            <person name="Hansen N.F."/>
            <person name="Hayashizaki Y."/>
            <person name="Johnson-Hopson C."/>
            <person name="Hsuan V.W."/>
            <person name="Iida K."/>
            <person name="Karnes M."/>
            <person name="Khan S."/>
            <person name="Koesema E."/>
            <person name="Ishida J."/>
            <person name="Jiang P.X."/>
            <person name="Jones T."/>
            <person name="Kawai J."/>
            <person name="Kamiya A."/>
            <person name="Meyers C."/>
            <person name="Nakajima M."/>
            <person name="Narusaka M."/>
            <person name="Seki M."/>
            <person name="Sakurai T."/>
            <person name="Satou M."/>
            <person name="Tamse R."/>
            <person name="Vaysberg M."/>
            <person name="Wallender E.K."/>
            <person name="Wong C."/>
            <person name="Yamamura Y."/>
            <person name="Yuan S."/>
            <person name="Shinozaki K."/>
            <person name="Davis R.W."/>
            <person name="Theologis A."/>
            <person name="Ecker J.R."/>
        </authorList>
    </citation>
    <scope>NUCLEOTIDE SEQUENCE [LARGE SCALE MRNA]</scope>
    <source>
        <strain>cv. Columbia</strain>
    </source>
</reference>
<reference key="5">
    <citation type="journal article" date="1997" name="Bot. Acta">
        <title>The G4 gene of Arabidopsis thaliana encodes a chlorophyll synthase of etiolated plants.</title>
        <authorList>
            <person name="Oster U."/>
            <person name="Ruediger W."/>
        </authorList>
    </citation>
    <scope>FUNCTION</scope>
</reference>
<protein>
    <recommendedName>
        <fullName>Chlorophyll synthase, chloroplastic</fullName>
        <ecNumber>2.5.1.62</ecNumber>
    </recommendedName>
    <alternativeName>
        <fullName>Polyprenyl transferase</fullName>
    </alternativeName>
    <alternativeName>
        <fullName>Protein G4</fullName>
        <shortName>AtG4</shortName>
    </alternativeName>
</protein>
<name>CHLG_ARATH</name>
<evidence type="ECO:0000255" key="1"/>
<evidence type="ECO:0000256" key="2">
    <source>
        <dbReference type="SAM" id="MobiDB-lite"/>
    </source>
</evidence>
<evidence type="ECO:0000269" key="3">
    <source>
    </source>
</evidence>
<evidence type="ECO:0000269" key="4">
    <source ref="5"/>
</evidence>
<evidence type="ECO:0000305" key="5"/>